<proteinExistence type="inferred from homology"/>
<reference key="1">
    <citation type="journal article" date="2007" name="Nat. Biotechnol.">
        <title>Complete genome sequence of the fish pathogen Flavobacterium psychrophilum.</title>
        <authorList>
            <person name="Duchaud E."/>
            <person name="Boussaha M."/>
            <person name="Loux V."/>
            <person name="Bernardet J.-F."/>
            <person name="Michel C."/>
            <person name="Kerouault B."/>
            <person name="Mondot S."/>
            <person name="Nicolas P."/>
            <person name="Bossy R."/>
            <person name="Caron C."/>
            <person name="Bessieres P."/>
            <person name="Gibrat J.-F."/>
            <person name="Claverol S."/>
            <person name="Dumetz F."/>
            <person name="Le Henaff M."/>
            <person name="Benmansour A."/>
        </authorList>
    </citation>
    <scope>NUCLEOTIDE SEQUENCE [LARGE SCALE GENOMIC DNA]</scope>
    <source>
        <strain>ATCC 49511 / DSM 21280 / CIP 103535 / JIP02/86</strain>
    </source>
</reference>
<sequence length="172" mass="19927">MKKIVLVGYMASGKTEIGKLLSKKVNLPFLDIDYLIEESLSKTVNEIFEEKGEVFFRKKEHEVFKNKINSKQSFILSLGGGTPCYAENHLFLQKDDVISIYLKGSVATLVDRLKMNKDKRPLLKNLANDELAEFVAKHLFDRNFYYSHCKYTIIIDDKSPFDIVEEIHKILF</sequence>
<keyword id="KW-0028">Amino-acid biosynthesis</keyword>
<keyword id="KW-0057">Aromatic amino acid biosynthesis</keyword>
<keyword id="KW-0067">ATP-binding</keyword>
<keyword id="KW-0963">Cytoplasm</keyword>
<keyword id="KW-0418">Kinase</keyword>
<keyword id="KW-0460">Magnesium</keyword>
<keyword id="KW-0479">Metal-binding</keyword>
<keyword id="KW-0547">Nucleotide-binding</keyword>
<keyword id="KW-1185">Reference proteome</keyword>
<keyword id="KW-0808">Transferase</keyword>
<accession>A6GZJ6</accession>
<protein>
    <recommendedName>
        <fullName evidence="1">Shikimate kinase</fullName>
        <shortName evidence="1">SK</shortName>
        <ecNumber evidence="1">2.7.1.71</ecNumber>
    </recommendedName>
</protein>
<comment type="function">
    <text evidence="1">Catalyzes the specific phosphorylation of the 3-hydroxyl group of shikimic acid using ATP as a cosubstrate.</text>
</comment>
<comment type="catalytic activity">
    <reaction evidence="1">
        <text>shikimate + ATP = 3-phosphoshikimate + ADP + H(+)</text>
        <dbReference type="Rhea" id="RHEA:13121"/>
        <dbReference type="ChEBI" id="CHEBI:15378"/>
        <dbReference type="ChEBI" id="CHEBI:30616"/>
        <dbReference type="ChEBI" id="CHEBI:36208"/>
        <dbReference type="ChEBI" id="CHEBI:145989"/>
        <dbReference type="ChEBI" id="CHEBI:456216"/>
        <dbReference type="EC" id="2.7.1.71"/>
    </reaction>
</comment>
<comment type="cofactor">
    <cofactor evidence="1">
        <name>Mg(2+)</name>
        <dbReference type="ChEBI" id="CHEBI:18420"/>
    </cofactor>
    <text evidence="1">Binds 1 Mg(2+) ion per subunit.</text>
</comment>
<comment type="pathway">
    <text evidence="1">Metabolic intermediate biosynthesis; chorismate biosynthesis; chorismate from D-erythrose 4-phosphate and phosphoenolpyruvate: step 5/7.</text>
</comment>
<comment type="subunit">
    <text evidence="1">Monomer.</text>
</comment>
<comment type="subcellular location">
    <subcellularLocation>
        <location evidence="1">Cytoplasm</location>
    </subcellularLocation>
</comment>
<comment type="similarity">
    <text evidence="1">Belongs to the shikimate kinase family.</text>
</comment>
<organism>
    <name type="scientific">Flavobacterium psychrophilum (strain ATCC 49511 / DSM 21280 / CIP 103535 / JIP02/86)</name>
    <dbReference type="NCBI Taxonomy" id="402612"/>
    <lineage>
        <taxon>Bacteria</taxon>
        <taxon>Pseudomonadati</taxon>
        <taxon>Bacteroidota</taxon>
        <taxon>Flavobacteriia</taxon>
        <taxon>Flavobacteriales</taxon>
        <taxon>Flavobacteriaceae</taxon>
        <taxon>Flavobacterium</taxon>
    </lineage>
</organism>
<evidence type="ECO:0000255" key="1">
    <source>
        <dbReference type="HAMAP-Rule" id="MF_00109"/>
    </source>
</evidence>
<name>AROK_FLAPJ</name>
<gene>
    <name evidence="1" type="primary">aroK</name>
    <name type="ordered locus">FP1443</name>
</gene>
<dbReference type="EC" id="2.7.1.71" evidence="1"/>
<dbReference type="EMBL" id="AM398681">
    <property type="protein sequence ID" value="CAL43519.1"/>
    <property type="molecule type" value="Genomic_DNA"/>
</dbReference>
<dbReference type="RefSeq" id="WP_011963564.1">
    <property type="nucleotide sequence ID" value="NC_009613.3"/>
</dbReference>
<dbReference type="RefSeq" id="YP_001296328.1">
    <property type="nucleotide sequence ID" value="NC_009613.3"/>
</dbReference>
<dbReference type="SMR" id="A6GZJ6"/>
<dbReference type="STRING" id="402612.FP1443"/>
<dbReference type="EnsemblBacteria" id="CAL43519">
    <property type="protein sequence ID" value="CAL43519"/>
    <property type="gene ID" value="FP1443"/>
</dbReference>
<dbReference type="KEGG" id="fps:FP1443"/>
<dbReference type="PATRIC" id="fig|402612.5.peg.1458"/>
<dbReference type="eggNOG" id="COG0703">
    <property type="taxonomic scope" value="Bacteria"/>
</dbReference>
<dbReference type="HOGENOM" id="CLU_057607_4_0_10"/>
<dbReference type="OrthoDB" id="9800332at2"/>
<dbReference type="UniPathway" id="UPA00053">
    <property type="reaction ID" value="UER00088"/>
</dbReference>
<dbReference type="Proteomes" id="UP000006394">
    <property type="component" value="Chromosome"/>
</dbReference>
<dbReference type="GO" id="GO:0005829">
    <property type="term" value="C:cytosol"/>
    <property type="evidence" value="ECO:0007669"/>
    <property type="project" value="TreeGrafter"/>
</dbReference>
<dbReference type="GO" id="GO:0005524">
    <property type="term" value="F:ATP binding"/>
    <property type="evidence" value="ECO:0007669"/>
    <property type="project" value="UniProtKB-UniRule"/>
</dbReference>
<dbReference type="GO" id="GO:0000287">
    <property type="term" value="F:magnesium ion binding"/>
    <property type="evidence" value="ECO:0007669"/>
    <property type="project" value="UniProtKB-UniRule"/>
</dbReference>
<dbReference type="GO" id="GO:0004765">
    <property type="term" value="F:shikimate kinase activity"/>
    <property type="evidence" value="ECO:0007669"/>
    <property type="project" value="UniProtKB-UniRule"/>
</dbReference>
<dbReference type="GO" id="GO:0008652">
    <property type="term" value="P:amino acid biosynthetic process"/>
    <property type="evidence" value="ECO:0007669"/>
    <property type="project" value="UniProtKB-KW"/>
</dbReference>
<dbReference type="GO" id="GO:0009073">
    <property type="term" value="P:aromatic amino acid family biosynthetic process"/>
    <property type="evidence" value="ECO:0007669"/>
    <property type="project" value="UniProtKB-KW"/>
</dbReference>
<dbReference type="GO" id="GO:0009423">
    <property type="term" value="P:chorismate biosynthetic process"/>
    <property type="evidence" value="ECO:0007669"/>
    <property type="project" value="UniProtKB-UniRule"/>
</dbReference>
<dbReference type="CDD" id="cd00464">
    <property type="entry name" value="SK"/>
    <property type="match status" value="1"/>
</dbReference>
<dbReference type="Gene3D" id="3.40.50.300">
    <property type="entry name" value="P-loop containing nucleotide triphosphate hydrolases"/>
    <property type="match status" value="1"/>
</dbReference>
<dbReference type="HAMAP" id="MF_00109">
    <property type="entry name" value="Shikimate_kinase"/>
    <property type="match status" value="1"/>
</dbReference>
<dbReference type="InterPro" id="IPR027417">
    <property type="entry name" value="P-loop_NTPase"/>
</dbReference>
<dbReference type="InterPro" id="IPR031322">
    <property type="entry name" value="Shikimate/glucono_kinase"/>
</dbReference>
<dbReference type="InterPro" id="IPR000623">
    <property type="entry name" value="Shikimate_kinase/TSH1"/>
</dbReference>
<dbReference type="PANTHER" id="PTHR21087">
    <property type="entry name" value="SHIKIMATE KINASE"/>
    <property type="match status" value="1"/>
</dbReference>
<dbReference type="PANTHER" id="PTHR21087:SF16">
    <property type="entry name" value="SHIKIMATE KINASE 1, CHLOROPLASTIC"/>
    <property type="match status" value="1"/>
</dbReference>
<dbReference type="Pfam" id="PF01202">
    <property type="entry name" value="SKI"/>
    <property type="match status" value="1"/>
</dbReference>
<dbReference type="PRINTS" id="PR01100">
    <property type="entry name" value="SHIKIMTKNASE"/>
</dbReference>
<dbReference type="SUPFAM" id="SSF52540">
    <property type="entry name" value="P-loop containing nucleoside triphosphate hydrolases"/>
    <property type="match status" value="1"/>
</dbReference>
<feature type="chain" id="PRO_1000119054" description="Shikimate kinase">
    <location>
        <begin position="1"/>
        <end position="172"/>
    </location>
</feature>
<feature type="binding site" evidence="1">
    <location>
        <begin position="11"/>
        <end position="16"/>
    </location>
    <ligand>
        <name>ATP</name>
        <dbReference type="ChEBI" id="CHEBI:30616"/>
    </ligand>
</feature>
<feature type="binding site" evidence="1">
    <location>
        <position position="15"/>
    </location>
    <ligand>
        <name>Mg(2+)</name>
        <dbReference type="ChEBI" id="CHEBI:18420"/>
    </ligand>
</feature>
<feature type="binding site" evidence="1">
    <location>
        <position position="33"/>
    </location>
    <ligand>
        <name>substrate</name>
    </ligand>
</feature>
<feature type="binding site" evidence="1">
    <location>
        <position position="57"/>
    </location>
    <ligand>
        <name>substrate</name>
    </ligand>
</feature>
<feature type="binding site" evidence="1">
    <location>
        <position position="80"/>
    </location>
    <ligand>
        <name>substrate</name>
    </ligand>
</feature>
<feature type="binding site" evidence="1">
    <location>
        <position position="120"/>
    </location>
    <ligand>
        <name>ATP</name>
        <dbReference type="ChEBI" id="CHEBI:30616"/>
    </ligand>
</feature>
<feature type="binding site" evidence="1">
    <location>
        <position position="142"/>
    </location>
    <ligand>
        <name>substrate</name>
    </ligand>
</feature>